<gene>
    <name evidence="1" type="primary">gmhA</name>
    <name type="ordered locus">YpsIP31758_3170</name>
</gene>
<dbReference type="EC" id="5.3.1.28" evidence="1"/>
<dbReference type="EMBL" id="CP000720">
    <property type="protein sequence ID" value="ABS49655.1"/>
    <property type="molecule type" value="Genomic_DNA"/>
</dbReference>
<dbReference type="SMR" id="A7FLK2"/>
<dbReference type="KEGG" id="ypi:YpsIP31758_3170"/>
<dbReference type="HOGENOM" id="CLU_080999_4_0_6"/>
<dbReference type="UniPathway" id="UPA00041">
    <property type="reaction ID" value="UER00436"/>
</dbReference>
<dbReference type="Proteomes" id="UP000002412">
    <property type="component" value="Chromosome"/>
</dbReference>
<dbReference type="GO" id="GO:0005737">
    <property type="term" value="C:cytoplasm"/>
    <property type="evidence" value="ECO:0007669"/>
    <property type="project" value="UniProtKB-SubCell"/>
</dbReference>
<dbReference type="GO" id="GO:0097367">
    <property type="term" value="F:carbohydrate derivative binding"/>
    <property type="evidence" value="ECO:0007669"/>
    <property type="project" value="InterPro"/>
</dbReference>
<dbReference type="GO" id="GO:0008968">
    <property type="term" value="F:D-sedoheptulose 7-phosphate isomerase activity"/>
    <property type="evidence" value="ECO:0007669"/>
    <property type="project" value="UniProtKB-UniRule"/>
</dbReference>
<dbReference type="GO" id="GO:0008270">
    <property type="term" value="F:zinc ion binding"/>
    <property type="evidence" value="ECO:0007669"/>
    <property type="project" value="UniProtKB-UniRule"/>
</dbReference>
<dbReference type="GO" id="GO:0005975">
    <property type="term" value="P:carbohydrate metabolic process"/>
    <property type="evidence" value="ECO:0007669"/>
    <property type="project" value="UniProtKB-UniRule"/>
</dbReference>
<dbReference type="GO" id="GO:2001061">
    <property type="term" value="P:D-glycero-D-manno-heptose 7-phosphate biosynthetic process"/>
    <property type="evidence" value="ECO:0007669"/>
    <property type="project" value="UniProtKB-UniPathway"/>
</dbReference>
<dbReference type="CDD" id="cd05006">
    <property type="entry name" value="SIS_GmhA"/>
    <property type="match status" value="1"/>
</dbReference>
<dbReference type="FunFam" id="3.40.50.10490:FF:000013">
    <property type="entry name" value="Phosphoheptose isomerase"/>
    <property type="match status" value="1"/>
</dbReference>
<dbReference type="Gene3D" id="3.40.50.10490">
    <property type="entry name" value="Glucose-6-phosphate isomerase like protein, domain 1"/>
    <property type="match status" value="1"/>
</dbReference>
<dbReference type="HAMAP" id="MF_00067">
    <property type="entry name" value="GmhA"/>
    <property type="match status" value="1"/>
</dbReference>
<dbReference type="InterPro" id="IPR035461">
    <property type="entry name" value="GmhA/DiaA"/>
</dbReference>
<dbReference type="InterPro" id="IPR004515">
    <property type="entry name" value="Phosphoheptose_Isoase"/>
</dbReference>
<dbReference type="InterPro" id="IPR001347">
    <property type="entry name" value="SIS_dom"/>
</dbReference>
<dbReference type="InterPro" id="IPR046348">
    <property type="entry name" value="SIS_dom_sf"/>
</dbReference>
<dbReference type="InterPro" id="IPR050099">
    <property type="entry name" value="SIS_GmhA/DiaA_subfam"/>
</dbReference>
<dbReference type="NCBIfam" id="TIGR00441">
    <property type="entry name" value="gmhA"/>
    <property type="match status" value="1"/>
</dbReference>
<dbReference type="NCBIfam" id="NF001628">
    <property type="entry name" value="PRK00414.1"/>
    <property type="match status" value="1"/>
</dbReference>
<dbReference type="PANTHER" id="PTHR30390:SF7">
    <property type="entry name" value="PHOSPHOHEPTOSE ISOMERASE"/>
    <property type="match status" value="1"/>
</dbReference>
<dbReference type="PANTHER" id="PTHR30390">
    <property type="entry name" value="SEDOHEPTULOSE 7-PHOSPHATE ISOMERASE / DNAA INITIATOR-ASSOCIATING FACTOR FOR REPLICATION INITIATION"/>
    <property type="match status" value="1"/>
</dbReference>
<dbReference type="Pfam" id="PF13580">
    <property type="entry name" value="SIS_2"/>
    <property type="match status" value="1"/>
</dbReference>
<dbReference type="SUPFAM" id="SSF53697">
    <property type="entry name" value="SIS domain"/>
    <property type="match status" value="1"/>
</dbReference>
<dbReference type="PROSITE" id="PS51464">
    <property type="entry name" value="SIS"/>
    <property type="match status" value="1"/>
</dbReference>
<keyword id="KW-0119">Carbohydrate metabolism</keyword>
<keyword id="KW-0963">Cytoplasm</keyword>
<keyword id="KW-0413">Isomerase</keyword>
<keyword id="KW-0479">Metal-binding</keyword>
<keyword id="KW-0862">Zinc</keyword>
<sequence>MYHDLIRSELNEAADTLANFLKDDSNIDAIQRAAILLADSFKAGGKVLSCGNGGSHCDAMHFAEELTGRYRENRPGYPAIAISDVSHLSCVSNDFGYDYVFSRYVEAVGREGDVLLGISTSGNSGNIIKAIEAARAKGMKVITLTGKDGGKMAGSADIEIRVPHFGYADRIQEIHIKVIHILIQLIEKEMVKA</sequence>
<accession>A7FLK2</accession>
<proteinExistence type="inferred from homology"/>
<organism>
    <name type="scientific">Yersinia pseudotuberculosis serotype O:1b (strain IP 31758)</name>
    <dbReference type="NCBI Taxonomy" id="349747"/>
    <lineage>
        <taxon>Bacteria</taxon>
        <taxon>Pseudomonadati</taxon>
        <taxon>Pseudomonadota</taxon>
        <taxon>Gammaproteobacteria</taxon>
        <taxon>Enterobacterales</taxon>
        <taxon>Yersiniaceae</taxon>
        <taxon>Yersinia</taxon>
    </lineage>
</organism>
<evidence type="ECO:0000255" key="1">
    <source>
        <dbReference type="HAMAP-Rule" id="MF_00067"/>
    </source>
</evidence>
<name>GMHA_YERP3</name>
<protein>
    <recommendedName>
        <fullName evidence="1">Phosphoheptose isomerase</fullName>
        <ecNumber evidence="1">5.3.1.28</ecNumber>
    </recommendedName>
    <alternativeName>
        <fullName evidence="1">Sedoheptulose 7-phosphate isomerase</fullName>
    </alternativeName>
</protein>
<comment type="function">
    <text evidence="1">Catalyzes the isomerization of sedoheptulose 7-phosphate in D-glycero-D-manno-heptose 7-phosphate.</text>
</comment>
<comment type="catalytic activity">
    <reaction evidence="1">
        <text>2 D-sedoheptulose 7-phosphate = D-glycero-alpha-D-manno-heptose 7-phosphate + D-glycero-beta-D-manno-heptose 7-phosphate</text>
        <dbReference type="Rhea" id="RHEA:27489"/>
        <dbReference type="ChEBI" id="CHEBI:57483"/>
        <dbReference type="ChEBI" id="CHEBI:60203"/>
        <dbReference type="ChEBI" id="CHEBI:60204"/>
        <dbReference type="EC" id="5.3.1.28"/>
    </reaction>
</comment>
<comment type="cofactor">
    <cofactor evidence="1">
        <name>Zn(2+)</name>
        <dbReference type="ChEBI" id="CHEBI:29105"/>
    </cofactor>
    <text evidence="1">Binds 1 zinc ion per subunit.</text>
</comment>
<comment type="pathway">
    <text evidence="1">Carbohydrate biosynthesis; D-glycero-D-manno-heptose 7-phosphate biosynthesis; D-glycero-alpha-D-manno-heptose 7-phosphate and D-glycero-beta-D-manno-heptose 7-phosphate from sedoheptulose 7-phosphate: step 1/1.</text>
</comment>
<comment type="subunit">
    <text evidence="1">Homotetramer.</text>
</comment>
<comment type="subcellular location">
    <subcellularLocation>
        <location evidence="1">Cytoplasm</location>
    </subcellularLocation>
</comment>
<comment type="miscellaneous">
    <text evidence="1">The reaction produces a racemic mixture of D-glycero-alpha-D-manno-heptose 7-phosphate and D-glycero-beta-D-manno-heptose 7-phosphate.</text>
</comment>
<comment type="similarity">
    <text evidence="1">Belongs to the SIS family. GmhA subfamily.</text>
</comment>
<reference key="1">
    <citation type="journal article" date="2007" name="PLoS Genet.">
        <title>The complete genome sequence of Yersinia pseudotuberculosis IP31758, the causative agent of Far East scarlet-like fever.</title>
        <authorList>
            <person name="Eppinger M."/>
            <person name="Rosovitz M.J."/>
            <person name="Fricke W.F."/>
            <person name="Rasko D.A."/>
            <person name="Kokorina G."/>
            <person name="Fayolle C."/>
            <person name="Lindler L.E."/>
            <person name="Carniel E."/>
            <person name="Ravel J."/>
        </authorList>
    </citation>
    <scope>NUCLEOTIDE SEQUENCE [LARGE SCALE GENOMIC DNA]</scope>
    <source>
        <strain>IP 31758</strain>
    </source>
</reference>
<feature type="chain" id="PRO_1000057454" description="Phosphoheptose isomerase">
    <location>
        <begin position="1"/>
        <end position="193"/>
    </location>
</feature>
<feature type="domain" description="SIS" evidence="1">
    <location>
        <begin position="37"/>
        <end position="193"/>
    </location>
</feature>
<feature type="binding site" evidence="1">
    <location>
        <begin position="52"/>
        <end position="54"/>
    </location>
    <ligand>
        <name>substrate</name>
    </ligand>
</feature>
<feature type="binding site" evidence="1">
    <location>
        <position position="61"/>
    </location>
    <ligand>
        <name>Zn(2+)</name>
        <dbReference type="ChEBI" id="CHEBI:29105"/>
    </ligand>
</feature>
<feature type="binding site" evidence="1">
    <location>
        <position position="65"/>
    </location>
    <ligand>
        <name>substrate</name>
    </ligand>
</feature>
<feature type="binding site" evidence="1">
    <location>
        <position position="65"/>
    </location>
    <ligand>
        <name>Zn(2+)</name>
        <dbReference type="ChEBI" id="CHEBI:29105"/>
    </ligand>
</feature>
<feature type="binding site" evidence="1">
    <location>
        <begin position="93"/>
        <end position="94"/>
    </location>
    <ligand>
        <name>substrate</name>
    </ligand>
</feature>
<feature type="binding site" evidence="1">
    <location>
        <begin position="119"/>
        <end position="121"/>
    </location>
    <ligand>
        <name>substrate</name>
    </ligand>
</feature>
<feature type="binding site" evidence="1">
    <location>
        <position position="124"/>
    </location>
    <ligand>
        <name>substrate</name>
    </ligand>
</feature>
<feature type="binding site" evidence="1">
    <location>
        <position position="172"/>
    </location>
    <ligand>
        <name>substrate</name>
    </ligand>
</feature>
<feature type="binding site" evidence="1">
    <location>
        <position position="172"/>
    </location>
    <ligand>
        <name>Zn(2+)</name>
        <dbReference type="ChEBI" id="CHEBI:29105"/>
    </ligand>
</feature>
<feature type="binding site" evidence="1">
    <location>
        <position position="180"/>
    </location>
    <ligand>
        <name>Zn(2+)</name>
        <dbReference type="ChEBI" id="CHEBI:29105"/>
    </ligand>
</feature>